<reference key="1">
    <citation type="journal article" date="2008" name="J. Mol. Evol.">
        <title>Complete sequence of the Duckweed (Lemna minor) chloroplast genome: structural organization and phylogenetic relationships to other angiosperms.</title>
        <authorList>
            <person name="Mardanov A.V."/>
            <person name="Ravin N.V."/>
            <person name="Kuznetsov B.B."/>
            <person name="Samigullin T.H."/>
            <person name="Antonov A.S."/>
            <person name="Kolganova T.V."/>
            <person name="Skyabin K.G."/>
        </authorList>
    </citation>
    <scope>NUCLEOTIDE SEQUENCE [LARGE SCALE GENOMIC DNA]</scope>
</reference>
<comment type="function">
    <text evidence="1">Component of the cytochrome b6-f complex, which mediates electron transfer between photosystem II (PSII) and photosystem I (PSI), cyclic electron flow around PSI, and state transitions. PetG is required for either the stability or assembly of the cytochrome b6-f complex.</text>
</comment>
<comment type="subunit">
    <text evidence="1">The 4 large subunits of the cytochrome b6-f complex are cytochrome b6, subunit IV (17 kDa polypeptide, PetD), cytochrome f and the Rieske protein, while the 4 small subunits are PetG, PetL, PetM and PetN. The complex functions as a dimer.</text>
</comment>
<comment type="subcellular location">
    <subcellularLocation>
        <location evidence="1">Plastid</location>
        <location evidence="1">Chloroplast thylakoid membrane</location>
        <topology evidence="1">Single-pass membrane protein</topology>
    </subcellularLocation>
</comment>
<comment type="similarity">
    <text evidence="1">Belongs to the PetG family.</text>
</comment>
<feature type="chain" id="PRO_0000355393" description="Cytochrome b6-f complex subunit 5">
    <location>
        <begin position="1"/>
        <end position="37"/>
    </location>
</feature>
<feature type="transmembrane region" description="Helical" evidence="1">
    <location>
        <begin position="5"/>
        <end position="25"/>
    </location>
</feature>
<sequence>MIEVLLFGIVLGLIPITLAGLFVTAYLQYRRGDQLDL</sequence>
<proteinExistence type="inferred from homology"/>
<name>PETG_LEMMI</name>
<gene>
    <name evidence="1" type="primary">petG</name>
</gene>
<dbReference type="EMBL" id="DQ400350">
    <property type="protein sequence ID" value="ABD48514.1"/>
    <property type="molecule type" value="Genomic_DNA"/>
</dbReference>
<dbReference type="RefSeq" id="YP_001595527.1">
    <property type="nucleotide sequence ID" value="NC_010109.1"/>
</dbReference>
<dbReference type="SMR" id="A9L9B5"/>
<dbReference type="GeneID" id="5787589"/>
<dbReference type="GO" id="GO:0009535">
    <property type="term" value="C:chloroplast thylakoid membrane"/>
    <property type="evidence" value="ECO:0007669"/>
    <property type="project" value="UniProtKB-SubCell"/>
</dbReference>
<dbReference type="GO" id="GO:0009512">
    <property type="term" value="C:cytochrome b6f complex"/>
    <property type="evidence" value="ECO:0007669"/>
    <property type="project" value="InterPro"/>
</dbReference>
<dbReference type="GO" id="GO:0045158">
    <property type="term" value="F:electron transporter, transferring electrons within cytochrome b6/f complex of photosystem II activity"/>
    <property type="evidence" value="ECO:0007669"/>
    <property type="project" value="UniProtKB-UniRule"/>
</dbReference>
<dbReference type="GO" id="GO:0017004">
    <property type="term" value="P:cytochrome complex assembly"/>
    <property type="evidence" value="ECO:0007669"/>
    <property type="project" value="UniProtKB-UniRule"/>
</dbReference>
<dbReference type="GO" id="GO:0015979">
    <property type="term" value="P:photosynthesis"/>
    <property type="evidence" value="ECO:0007669"/>
    <property type="project" value="UniProtKB-KW"/>
</dbReference>
<dbReference type="HAMAP" id="MF_00432">
    <property type="entry name" value="Cytb6_f_PetG"/>
    <property type="match status" value="1"/>
</dbReference>
<dbReference type="InterPro" id="IPR003683">
    <property type="entry name" value="Cyt_6/f_cplx_su5"/>
</dbReference>
<dbReference type="InterPro" id="IPR036099">
    <property type="entry name" value="Cyt_6/f_cplx_su5_sf"/>
</dbReference>
<dbReference type="NCBIfam" id="NF001907">
    <property type="entry name" value="PRK00665.1"/>
    <property type="match status" value="1"/>
</dbReference>
<dbReference type="Pfam" id="PF02529">
    <property type="entry name" value="PetG"/>
    <property type="match status" value="1"/>
</dbReference>
<dbReference type="PIRSF" id="PIRSF000034">
    <property type="entry name" value="Cyt_b6-f_V"/>
    <property type="match status" value="1"/>
</dbReference>
<dbReference type="SUPFAM" id="SSF103446">
    <property type="entry name" value="PetG subunit of the cytochrome b6f complex"/>
    <property type="match status" value="1"/>
</dbReference>
<accession>A9L9B5</accession>
<keyword id="KW-0150">Chloroplast</keyword>
<keyword id="KW-0249">Electron transport</keyword>
<keyword id="KW-0472">Membrane</keyword>
<keyword id="KW-0602">Photosynthesis</keyword>
<keyword id="KW-0934">Plastid</keyword>
<keyword id="KW-0793">Thylakoid</keyword>
<keyword id="KW-0812">Transmembrane</keyword>
<keyword id="KW-1133">Transmembrane helix</keyword>
<keyword id="KW-0813">Transport</keyword>
<geneLocation type="chloroplast"/>
<protein>
    <recommendedName>
        <fullName evidence="1">Cytochrome b6-f complex subunit 5</fullName>
    </recommendedName>
    <alternativeName>
        <fullName evidence="1">Cytochrome b6-f complex subunit PetG</fullName>
    </alternativeName>
    <alternativeName>
        <fullName evidence="1">Cytochrome b6-f complex subunit V</fullName>
    </alternativeName>
</protein>
<evidence type="ECO:0000255" key="1">
    <source>
        <dbReference type="HAMAP-Rule" id="MF_00432"/>
    </source>
</evidence>
<organism>
    <name type="scientific">Lemna minor</name>
    <name type="common">Common duckweed</name>
    <dbReference type="NCBI Taxonomy" id="4472"/>
    <lineage>
        <taxon>Eukaryota</taxon>
        <taxon>Viridiplantae</taxon>
        <taxon>Streptophyta</taxon>
        <taxon>Embryophyta</taxon>
        <taxon>Tracheophyta</taxon>
        <taxon>Spermatophyta</taxon>
        <taxon>Magnoliopsida</taxon>
        <taxon>Liliopsida</taxon>
        <taxon>Araceae</taxon>
        <taxon>Lemnoideae</taxon>
        <taxon>Lemna</taxon>
    </lineage>
</organism>